<comment type="function">
    <text evidence="3">May be involved in the regulation of the production of pyocyanine, one of the major virulence factors secreted by P.aeruginosa, and other virulence factors.</text>
</comment>
<comment type="induction">
    <text evidence="3">Highly expressed in biofilms.</text>
</comment>
<comment type="disruption phenotype">
    <text evidence="2 3">Knockout of the gene increases production of pyocyanine and promotes P.aeruginosa pathogenicity in vivo (PubMed:33134189). Deletion of the gene has no effect on phagocytosis, but it significantly reduces the production of cytokines in murine macrophage-like RAW264.7 cells and human macrophage-like cell line THP-1 (PubMed:33134189). In an acute pneumonia murine infection model, infection with the mutant inhibits cytokine secretion in the lungs but increases the infiltration of inflammatory cells compared to the wild-type strain (PubMed:33134189). In plant assays (poplar and barley), disruption of the gene increases motility and reduces virulence in barley (PubMed:21261818).</text>
</comment>
<comment type="similarity">
    <text evidence="4">Belongs to the con-10 family.</text>
</comment>
<reference key="1">
    <citation type="journal article" date="2000" name="Nature">
        <title>Complete genome sequence of Pseudomonas aeruginosa PAO1, an opportunistic pathogen.</title>
        <authorList>
            <person name="Stover C.K."/>
            <person name="Pham X.-Q.T."/>
            <person name="Erwin A.L."/>
            <person name="Mizoguchi S.D."/>
            <person name="Warrener P."/>
            <person name="Hickey M.J."/>
            <person name="Brinkman F.S.L."/>
            <person name="Hufnagle W.O."/>
            <person name="Kowalik D.J."/>
            <person name="Lagrou M."/>
            <person name="Garber R.L."/>
            <person name="Goltry L."/>
            <person name="Tolentino E."/>
            <person name="Westbrock-Wadman S."/>
            <person name="Yuan Y."/>
            <person name="Brody L.L."/>
            <person name="Coulter S.N."/>
            <person name="Folger K.R."/>
            <person name="Kas A."/>
            <person name="Larbig K."/>
            <person name="Lim R.M."/>
            <person name="Smith K.A."/>
            <person name="Spencer D.H."/>
            <person name="Wong G.K.-S."/>
            <person name="Wu Z."/>
            <person name="Paulsen I.T."/>
            <person name="Reizer J."/>
            <person name="Saier M.H. Jr."/>
            <person name="Hancock R.E.W."/>
            <person name="Lory S."/>
            <person name="Olson M.V."/>
        </authorList>
    </citation>
    <scope>NUCLEOTIDE SEQUENCE [LARGE SCALE GENOMIC DNA]</scope>
    <source>
        <strain>ATCC 15692 / DSM 22644 / CIP 104116 / JCM 14847 / LMG 12228 / 1C / PRS 101 / PAO1</strain>
    </source>
</reference>
<reference key="2">
    <citation type="journal article" date="2008" name="Microb. Biotechnol.">
        <title>Pseudomonas aeruginosa PAO1 virulence factors and poplar tree response in the rhizosphere.</title>
        <authorList>
            <person name="Attila C."/>
            <person name="Ueda A."/>
            <person name="Cirillo S.L."/>
            <person name="Cirillo J.D."/>
            <person name="Chen W."/>
            <person name="Wood T.K."/>
        </authorList>
    </citation>
    <scope>DISRUPTION PHENOTYPE</scope>
    <source>
        <strain>ATCC 15692 / DSM 22644 / CIP 104116 / JCM 14847 / LMG 12228 / 1C / PRS 101 / PAO1</strain>
    </source>
</reference>
<reference key="3">
    <citation type="journal article" date="2020" name="Front. Cell. Infect. Microbiol.">
        <title>PA2146 gene knockout is associated with Pseudomonas aeruginosa pathogenicity in macrophage and host immune response.</title>
        <authorList>
            <person name="She P."/>
            <person name="Liu Y."/>
            <person name="Luo Z."/>
            <person name="Chen L."/>
            <person name="Zhou L."/>
            <person name="Hussain Z."/>
            <person name="Wu Y."/>
        </authorList>
    </citation>
    <scope>FUNCTION</scope>
    <scope>INDUCTION</scope>
    <scope>DISRUPTION PHENOTYPE</scope>
    <source>
        <strain>ATCC 15692 / DSM 22644 / CIP 104116 / JCM 14847 / LMG 12228 / 1C / PRS 101 / PAO1</strain>
    </source>
</reference>
<dbReference type="EMBL" id="AE004091">
    <property type="protein sequence ID" value="AAG05534.1"/>
    <property type="molecule type" value="Genomic_DNA"/>
</dbReference>
<dbReference type="PIR" id="A83376">
    <property type="entry name" value="A83376"/>
</dbReference>
<dbReference type="RefSeq" id="NP_250836.1">
    <property type="nucleotide sequence ID" value="NC_002516.2"/>
</dbReference>
<dbReference type="RefSeq" id="WP_003088912.1">
    <property type="nucleotide sequence ID" value="NZ_QZGE01000014.1"/>
</dbReference>
<dbReference type="FunCoup" id="Q9I1W9">
    <property type="interactions" value="69"/>
</dbReference>
<dbReference type="STRING" id="208964.PA2146"/>
<dbReference type="PaxDb" id="208964-PA2146"/>
<dbReference type="DNASU" id="881691"/>
<dbReference type="GeneID" id="881691"/>
<dbReference type="KEGG" id="pae:PA2146"/>
<dbReference type="PATRIC" id="fig|208964.12.peg.2244"/>
<dbReference type="PseudoCAP" id="PA2146"/>
<dbReference type="HOGENOM" id="CLU_142865_5_1_6"/>
<dbReference type="InParanoid" id="Q9I1W9"/>
<dbReference type="OrthoDB" id="6545243at2"/>
<dbReference type="PhylomeDB" id="Q9I1W9"/>
<dbReference type="BioCyc" id="PAER208964:G1FZ6-2186-MONOMER"/>
<dbReference type="PHI-base" id="PHI:10946"/>
<dbReference type="Proteomes" id="UP000002438">
    <property type="component" value="Chromosome"/>
</dbReference>
<dbReference type="InterPro" id="IPR019626">
    <property type="entry name" value="Stress-induced_KGG_rpt"/>
</dbReference>
<dbReference type="Pfam" id="PF10685">
    <property type="entry name" value="KGG"/>
    <property type="match status" value="2"/>
</dbReference>
<protein>
    <recommendedName>
        <fullName evidence="4">Putative virulence-regulating protein PA2146</fullName>
    </recommendedName>
</protein>
<keyword id="KW-1185">Reference proteome</keyword>
<organism>
    <name type="scientific">Pseudomonas aeruginosa (strain ATCC 15692 / DSM 22644 / CIP 104116 / JCM 14847 / LMG 12228 / 1C / PRS 101 / PAO1)</name>
    <dbReference type="NCBI Taxonomy" id="208964"/>
    <lineage>
        <taxon>Bacteria</taxon>
        <taxon>Pseudomonadati</taxon>
        <taxon>Pseudomonadota</taxon>
        <taxon>Gammaproteobacteria</taxon>
        <taxon>Pseudomonadales</taxon>
        <taxon>Pseudomonadaceae</taxon>
        <taxon>Pseudomonas</taxon>
    </lineage>
</organism>
<feature type="chain" id="PRO_0000456657" description="Putative virulence-regulating protein PA2146">
    <location>
        <begin position="1"/>
        <end position="55"/>
    </location>
</feature>
<feature type="region of interest" description="Disordered" evidence="1">
    <location>
        <begin position="1"/>
        <end position="55"/>
    </location>
</feature>
<feature type="compositionally biased region" description="Basic and acidic residues" evidence="1">
    <location>
        <begin position="11"/>
        <end position="23"/>
    </location>
</feature>
<feature type="compositionally biased region" description="Basic and acidic residues" evidence="1">
    <location>
        <begin position="36"/>
        <end position="45"/>
    </location>
</feature>
<gene>
    <name evidence="5" type="ordered locus">PA2146</name>
</gene>
<evidence type="ECO:0000256" key="1">
    <source>
        <dbReference type="SAM" id="MobiDB-lite"/>
    </source>
</evidence>
<evidence type="ECO:0000269" key="2">
    <source>
    </source>
</evidence>
<evidence type="ECO:0000269" key="3">
    <source>
    </source>
</evidence>
<evidence type="ECO:0000305" key="4"/>
<evidence type="ECO:0000312" key="5">
    <source>
        <dbReference type="EMBL" id="AAG05534.1"/>
    </source>
</evidence>
<sequence length="55" mass="5580">MAQHQGGKGNFAEDPKRASEAGKKGGQASGGNFKNDPQRASEAGKKGGQRSHGGN</sequence>
<name>RGVIR_PSEAE</name>
<accession>Q9I1W9</accession>
<proteinExistence type="evidence at transcript level"/>